<sequence length="336" mass="35272">MKLAIIAGDGIGPEVTAEAVKVLDAVVPGVQKTSYDLGARRFHATGEVLPDSVVAELRNHDAILLGAIGDPSVPSGVLERGLLLRLRFELDHHINLRPARLYPGVASPLSGNPGIDFVVVREGTEGPYTGNGGAIRVGTPNEVATEVSVNTAFGVRRVVADAFERARRRRKHLTLVHKTNVLTLAGGLWLRTVDEVGECYPDVEVAYQHVDAATIHMITDPGRFDVIVTDNLFGDIITDLAAAVCGGIGLAASGNIDATRANPSMFEPVHGSAPDIAGQGIADPTAAIMSVALLLSHLGEHDAAARVDRAVEAHLATRGSERLATSDVGERIAAAL</sequence>
<proteinExistence type="inferred from homology"/>
<gene>
    <name evidence="1" type="primary">leuB</name>
    <name type="ordered locus">JTY_3011</name>
</gene>
<name>LEU3_MYCBT</name>
<keyword id="KW-0028">Amino-acid biosynthesis</keyword>
<keyword id="KW-0100">Branched-chain amino acid biosynthesis</keyword>
<keyword id="KW-0963">Cytoplasm</keyword>
<keyword id="KW-0432">Leucine biosynthesis</keyword>
<keyword id="KW-0460">Magnesium</keyword>
<keyword id="KW-0464">Manganese</keyword>
<keyword id="KW-0479">Metal-binding</keyword>
<keyword id="KW-0520">NAD</keyword>
<keyword id="KW-0560">Oxidoreductase</keyword>
<organism>
    <name type="scientific">Mycobacterium bovis (strain BCG / Tokyo 172 / ATCC 35737 / TMC 1019)</name>
    <dbReference type="NCBI Taxonomy" id="561275"/>
    <lineage>
        <taxon>Bacteria</taxon>
        <taxon>Bacillati</taxon>
        <taxon>Actinomycetota</taxon>
        <taxon>Actinomycetes</taxon>
        <taxon>Mycobacteriales</taxon>
        <taxon>Mycobacteriaceae</taxon>
        <taxon>Mycobacterium</taxon>
        <taxon>Mycobacterium tuberculosis complex</taxon>
    </lineage>
</organism>
<evidence type="ECO:0000255" key="1">
    <source>
        <dbReference type="HAMAP-Rule" id="MF_01035"/>
    </source>
</evidence>
<feature type="chain" id="PRO_1000149451" description="3-isopropylmalate dehydrogenase">
    <location>
        <begin position="1"/>
        <end position="336"/>
    </location>
</feature>
<feature type="binding site" evidence="1">
    <location>
        <position position="87"/>
    </location>
    <ligand>
        <name>substrate</name>
    </ligand>
</feature>
<feature type="binding site" evidence="1">
    <location>
        <position position="97"/>
    </location>
    <ligand>
        <name>substrate</name>
    </ligand>
</feature>
<feature type="binding site" evidence="1">
    <location>
        <position position="121"/>
    </location>
    <ligand>
        <name>substrate</name>
    </ligand>
</feature>
<feature type="binding site" evidence="1">
    <location>
        <position position="211"/>
    </location>
    <ligand>
        <name>Mg(2+)</name>
        <dbReference type="ChEBI" id="CHEBI:18420"/>
    </ligand>
</feature>
<feature type="binding site" evidence="1">
    <location>
        <position position="211"/>
    </location>
    <ligand>
        <name>substrate</name>
    </ligand>
</feature>
<feature type="binding site" evidence="1">
    <location>
        <position position="235"/>
    </location>
    <ligand>
        <name>Mg(2+)</name>
        <dbReference type="ChEBI" id="CHEBI:18420"/>
    </ligand>
</feature>
<feature type="binding site" evidence="1">
    <location>
        <position position="239"/>
    </location>
    <ligand>
        <name>Mg(2+)</name>
        <dbReference type="ChEBI" id="CHEBI:18420"/>
    </ligand>
</feature>
<feature type="binding site" evidence="1">
    <location>
        <begin position="271"/>
        <end position="283"/>
    </location>
    <ligand>
        <name>NAD(+)</name>
        <dbReference type="ChEBI" id="CHEBI:57540"/>
    </ligand>
</feature>
<feature type="site" description="Important for catalysis" evidence="1">
    <location>
        <position position="128"/>
    </location>
</feature>
<feature type="site" description="Important for catalysis" evidence="1">
    <location>
        <position position="178"/>
    </location>
</feature>
<accession>C1AGB0</accession>
<dbReference type="EC" id="1.1.1.85" evidence="1"/>
<dbReference type="EMBL" id="AP010918">
    <property type="protein sequence ID" value="BAH27289.1"/>
    <property type="molecule type" value="Genomic_DNA"/>
</dbReference>
<dbReference type="RefSeq" id="WP_003415144.1">
    <property type="nucleotide sequence ID" value="NZ_CP014566.1"/>
</dbReference>
<dbReference type="SMR" id="C1AGB0"/>
<dbReference type="KEGG" id="mbt:JTY_3011"/>
<dbReference type="HOGENOM" id="CLU_031953_0_1_11"/>
<dbReference type="UniPathway" id="UPA00048">
    <property type="reaction ID" value="UER00072"/>
</dbReference>
<dbReference type="GO" id="GO:0005737">
    <property type="term" value="C:cytoplasm"/>
    <property type="evidence" value="ECO:0007669"/>
    <property type="project" value="UniProtKB-SubCell"/>
</dbReference>
<dbReference type="GO" id="GO:0003862">
    <property type="term" value="F:3-isopropylmalate dehydrogenase activity"/>
    <property type="evidence" value="ECO:0007669"/>
    <property type="project" value="UniProtKB-UniRule"/>
</dbReference>
<dbReference type="GO" id="GO:0000287">
    <property type="term" value="F:magnesium ion binding"/>
    <property type="evidence" value="ECO:0007669"/>
    <property type="project" value="InterPro"/>
</dbReference>
<dbReference type="GO" id="GO:0051287">
    <property type="term" value="F:NAD binding"/>
    <property type="evidence" value="ECO:0007669"/>
    <property type="project" value="InterPro"/>
</dbReference>
<dbReference type="GO" id="GO:0009098">
    <property type="term" value="P:L-leucine biosynthetic process"/>
    <property type="evidence" value="ECO:0007669"/>
    <property type="project" value="UniProtKB-UniRule"/>
</dbReference>
<dbReference type="FunFam" id="3.40.718.10:FF:000026">
    <property type="entry name" value="3-isopropylmalate dehydrogenase"/>
    <property type="match status" value="1"/>
</dbReference>
<dbReference type="Gene3D" id="3.40.718.10">
    <property type="entry name" value="Isopropylmalate Dehydrogenase"/>
    <property type="match status" value="1"/>
</dbReference>
<dbReference type="HAMAP" id="MF_01035">
    <property type="entry name" value="LeuB_type2"/>
    <property type="match status" value="1"/>
</dbReference>
<dbReference type="InterPro" id="IPR050501">
    <property type="entry name" value="ICDH/IPMDH"/>
</dbReference>
<dbReference type="InterPro" id="IPR019818">
    <property type="entry name" value="IsoCit/isopropylmalate_DH_CS"/>
</dbReference>
<dbReference type="InterPro" id="IPR024084">
    <property type="entry name" value="IsoPropMal-DH-like_dom"/>
</dbReference>
<dbReference type="InterPro" id="IPR023698">
    <property type="entry name" value="LeuB_actb"/>
</dbReference>
<dbReference type="NCBIfam" id="NF002898">
    <property type="entry name" value="PRK03437.1"/>
    <property type="match status" value="1"/>
</dbReference>
<dbReference type="PANTHER" id="PTHR43275">
    <property type="entry name" value="D-MALATE DEHYDROGENASE [DECARBOXYLATING]"/>
    <property type="match status" value="1"/>
</dbReference>
<dbReference type="PANTHER" id="PTHR43275:SF1">
    <property type="entry name" value="D-MALATE DEHYDROGENASE [DECARBOXYLATING]"/>
    <property type="match status" value="1"/>
</dbReference>
<dbReference type="Pfam" id="PF00180">
    <property type="entry name" value="Iso_dh"/>
    <property type="match status" value="1"/>
</dbReference>
<dbReference type="SMART" id="SM01329">
    <property type="entry name" value="Iso_dh"/>
    <property type="match status" value="1"/>
</dbReference>
<dbReference type="SUPFAM" id="SSF53659">
    <property type="entry name" value="Isocitrate/Isopropylmalate dehydrogenase-like"/>
    <property type="match status" value="1"/>
</dbReference>
<dbReference type="PROSITE" id="PS00470">
    <property type="entry name" value="IDH_IMDH"/>
    <property type="match status" value="1"/>
</dbReference>
<protein>
    <recommendedName>
        <fullName evidence="1">3-isopropylmalate dehydrogenase</fullName>
        <ecNumber evidence="1">1.1.1.85</ecNumber>
    </recommendedName>
    <alternativeName>
        <fullName evidence="1">3-IPM-DH</fullName>
    </alternativeName>
    <alternativeName>
        <fullName evidence="1">Beta-IPM dehydrogenase</fullName>
        <shortName evidence="1">IMDH</shortName>
    </alternativeName>
</protein>
<comment type="function">
    <text evidence="1">Catalyzes the oxidation of 3-carboxy-2-hydroxy-4-methylpentanoate (3-isopropylmalate) to 3-carboxy-4-methyl-2-oxopentanoate. The product decarboxylates to 4-methyl-2 oxopentanoate.</text>
</comment>
<comment type="catalytic activity">
    <reaction evidence="1">
        <text>(2R,3S)-3-isopropylmalate + NAD(+) = 4-methyl-2-oxopentanoate + CO2 + NADH</text>
        <dbReference type="Rhea" id="RHEA:32271"/>
        <dbReference type="ChEBI" id="CHEBI:16526"/>
        <dbReference type="ChEBI" id="CHEBI:17865"/>
        <dbReference type="ChEBI" id="CHEBI:35121"/>
        <dbReference type="ChEBI" id="CHEBI:57540"/>
        <dbReference type="ChEBI" id="CHEBI:57945"/>
        <dbReference type="EC" id="1.1.1.85"/>
    </reaction>
</comment>
<comment type="cofactor">
    <cofactor evidence="1">
        <name>Mg(2+)</name>
        <dbReference type="ChEBI" id="CHEBI:18420"/>
    </cofactor>
    <cofactor evidence="1">
        <name>Mn(2+)</name>
        <dbReference type="ChEBI" id="CHEBI:29035"/>
    </cofactor>
    <text evidence="1">Binds 1 Mg(2+) or Mn(2+) ion per subunit.</text>
</comment>
<comment type="pathway">
    <text evidence="1">Amino-acid biosynthesis; L-leucine biosynthesis; L-leucine from 3-methyl-2-oxobutanoate: step 3/4.</text>
</comment>
<comment type="subunit">
    <text evidence="1">Homodimer.</text>
</comment>
<comment type="subcellular location">
    <subcellularLocation>
        <location evidence="1">Cytoplasm</location>
    </subcellularLocation>
</comment>
<comment type="similarity">
    <text evidence="1">Belongs to the isocitrate and isopropylmalate dehydrogenases family. LeuB type 2 subfamily.</text>
</comment>
<reference key="1">
    <citation type="journal article" date="2009" name="Vaccine">
        <title>Whole genome sequence analysis of Mycobacterium bovis bacillus Calmette-Guerin (BCG) Tokyo 172: a comparative study of BCG vaccine substrains.</title>
        <authorList>
            <person name="Seki M."/>
            <person name="Honda I."/>
            <person name="Fujita I."/>
            <person name="Yano I."/>
            <person name="Yamamoto S."/>
            <person name="Koyama A."/>
        </authorList>
    </citation>
    <scope>NUCLEOTIDE SEQUENCE [LARGE SCALE GENOMIC DNA]</scope>
    <source>
        <strain>BCG / Tokyo 172 / ATCC 35737 / TMC 1019</strain>
    </source>
</reference>